<organism>
    <name type="scientific">Francisella tularensis subsp. holarctica (strain LVS)</name>
    <dbReference type="NCBI Taxonomy" id="376619"/>
    <lineage>
        <taxon>Bacteria</taxon>
        <taxon>Pseudomonadati</taxon>
        <taxon>Pseudomonadota</taxon>
        <taxon>Gammaproteobacteria</taxon>
        <taxon>Thiotrichales</taxon>
        <taxon>Francisellaceae</taxon>
        <taxon>Francisella</taxon>
    </lineage>
</organism>
<sequence>MHYSVLLQESINDLNINPQGIYIDATFGRGGHSKAILNRLTTGRLIAFDKDLDAISYARENFQFSNFEIVHASFASIYDYCLQHSLLGKIDGIIMDLGVSSPQLDNAARGFSFTHNGPLDMRMDVSKGITASQALEELSVYDLSYIFKVYGEERFAKKIALRIKDYIQQNGSIRTTLELAELIRATIGKKEKKNPATRCFQALRIYVNNELKDLEALLENILAVIKSGGRIAAISFHSLEDRIVKQKFSALINPKQELNRITKMLPQDSSQIKLKWITKKSKANEDELNQNVRSRSAILRVVEKL</sequence>
<protein>
    <recommendedName>
        <fullName evidence="1">Ribosomal RNA small subunit methyltransferase H</fullName>
        <ecNumber evidence="1">2.1.1.199</ecNumber>
    </recommendedName>
    <alternativeName>
        <fullName evidence="1">16S rRNA m(4)C1402 methyltransferase</fullName>
    </alternativeName>
    <alternativeName>
        <fullName evidence="1">rRNA (cytosine-N(4)-)-methyltransferase RsmH</fullName>
    </alternativeName>
</protein>
<name>RSMH_FRATH</name>
<dbReference type="EC" id="2.1.1.199" evidence="1"/>
<dbReference type="EMBL" id="AM233362">
    <property type="protein sequence ID" value="CAJ79980.1"/>
    <property type="molecule type" value="Genomic_DNA"/>
</dbReference>
<dbReference type="RefSeq" id="WP_003016893.1">
    <property type="nucleotide sequence ID" value="NZ_CP009694.1"/>
</dbReference>
<dbReference type="SMR" id="Q2A265"/>
<dbReference type="KEGG" id="ftl:FTL_1541"/>
<dbReference type="Proteomes" id="UP000001944">
    <property type="component" value="Chromosome"/>
</dbReference>
<dbReference type="GO" id="GO:0005737">
    <property type="term" value="C:cytoplasm"/>
    <property type="evidence" value="ECO:0007669"/>
    <property type="project" value="UniProtKB-SubCell"/>
</dbReference>
<dbReference type="GO" id="GO:0071424">
    <property type="term" value="F:rRNA (cytosine-N4-)-methyltransferase activity"/>
    <property type="evidence" value="ECO:0007669"/>
    <property type="project" value="UniProtKB-UniRule"/>
</dbReference>
<dbReference type="GO" id="GO:0070475">
    <property type="term" value="P:rRNA base methylation"/>
    <property type="evidence" value="ECO:0007669"/>
    <property type="project" value="UniProtKB-UniRule"/>
</dbReference>
<dbReference type="Gene3D" id="1.10.150.170">
    <property type="entry name" value="Putative methyltransferase TM0872, insert domain"/>
    <property type="match status" value="1"/>
</dbReference>
<dbReference type="Gene3D" id="3.40.50.150">
    <property type="entry name" value="Vaccinia Virus protein VP39"/>
    <property type="match status" value="1"/>
</dbReference>
<dbReference type="HAMAP" id="MF_01007">
    <property type="entry name" value="16SrRNA_methyltr_H"/>
    <property type="match status" value="1"/>
</dbReference>
<dbReference type="InterPro" id="IPR002903">
    <property type="entry name" value="RsmH"/>
</dbReference>
<dbReference type="InterPro" id="IPR023397">
    <property type="entry name" value="SAM-dep_MeTrfase_MraW_recog"/>
</dbReference>
<dbReference type="InterPro" id="IPR029063">
    <property type="entry name" value="SAM-dependent_MTases_sf"/>
</dbReference>
<dbReference type="NCBIfam" id="TIGR00006">
    <property type="entry name" value="16S rRNA (cytosine(1402)-N(4))-methyltransferase RsmH"/>
    <property type="match status" value="1"/>
</dbReference>
<dbReference type="PANTHER" id="PTHR11265:SF0">
    <property type="entry name" value="12S RRNA N4-METHYLCYTIDINE METHYLTRANSFERASE"/>
    <property type="match status" value="1"/>
</dbReference>
<dbReference type="PANTHER" id="PTHR11265">
    <property type="entry name" value="S-ADENOSYL-METHYLTRANSFERASE MRAW"/>
    <property type="match status" value="1"/>
</dbReference>
<dbReference type="Pfam" id="PF01795">
    <property type="entry name" value="Methyltransf_5"/>
    <property type="match status" value="1"/>
</dbReference>
<dbReference type="PIRSF" id="PIRSF004486">
    <property type="entry name" value="MraW"/>
    <property type="match status" value="1"/>
</dbReference>
<dbReference type="SUPFAM" id="SSF81799">
    <property type="entry name" value="Putative methyltransferase TM0872, insert domain"/>
    <property type="match status" value="1"/>
</dbReference>
<dbReference type="SUPFAM" id="SSF53335">
    <property type="entry name" value="S-adenosyl-L-methionine-dependent methyltransferases"/>
    <property type="match status" value="1"/>
</dbReference>
<keyword id="KW-0963">Cytoplasm</keyword>
<keyword id="KW-0489">Methyltransferase</keyword>
<keyword id="KW-1185">Reference proteome</keyword>
<keyword id="KW-0698">rRNA processing</keyword>
<keyword id="KW-0949">S-adenosyl-L-methionine</keyword>
<keyword id="KW-0808">Transferase</keyword>
<reference key="1">
    <citation type="submission" date="2006-03" db="EMBL/GenBank/DDBJ databases">
        <title>Complete genome sequence of Francisella tularensis LVS (Live Vaccine Strain).</title>
        <authorList>
            <person name="Chain P."/>
            <person name="Larimer F."/>
            <person name="Land M."/>
            <person name="Stilwagen S."/>
            <person name="Larsson P."/>
            <person name="Bearden S."/>
            <person name="Chu M."/>
            <person name="Oyston P."/>
            <person name="Forsman M."/>
            <person name="Andersson S."/>
            <person name="Lindler L."/>
            <person name="Titball R."/>
            <person name="Garcia E."/>
        </authorList>
    </citation>
    <scope>NUCLEOTIDE SEQUENCE [LARGE SCALE GENOMIC DNA]</scope>
    <source>
        <strain>LVS</strain>
    </source>
</reference>
<accession>Q2A265</accession>
<gene>
    <name evidence="1" type="primary">rsmH</name>
    <name type="synonym">mraW</name>
    <name type="ordered locus">FTL_1541</name>
</gene>
<proteinExistence type="inferred from homology"/>
<evidence type="ECO:0000255" key="1">
    <source>
        <dbReference type="HAMAP-Rule" id="MF_01007"/>
    </source>
</evidence>
<comment type="function">
    <text evidence="1">Specifically methylates the N4 position of cytidine in position 1402 (C1402) of 16S rRNA.</text>
</comment>
<comment type="catalytic activity">
    <reaction evidence="1">
        <text>cytidine(1402) in 16S rRNA + S-adenosyl-L-methionine = N(4)-methylcytidine(1402) in 16S rRNA + S-adenosyl-L-homocysteine + H(+)</text>
        <dbReference type="Rhea" id="RHEA:42928"/>
        <dbReference type="Rhea" id="RHEA-COMP:10286"/>
        <dbReference type="Rhea" id="RHEA-COMP:10287"/>
        <dbReference type="ChEBI" id="CHEBI:15378"/>
        <dbReference type="ChEBI" id="CHEBI:57856"/>
        <dbReference type="ChEBI" id="CHEBI:59789"/>
        <dbReference type="ChEBI" id="CHEBI:74506"/>
        <dbReference type="ChEBI" id="CHEBI:82748"/>
        <dbReference type="EC" id="2.1.1.199"/>
    </reaction>
</comment>
<comment type="subcellular location">
    <subcellularLocation>
        <location evidence="1">Cytoplasm</location>
    </subcellularLocation>
</comment>
<comment type="similarity">
    <text evidence="1">Belongs to the methyltransferase superfamily. RsmH family.</text>
</comment>
<feature type="chain" id="PRO_0000386897" description="Ribosomal RNA small subunit methyltransferase H">
    <location>
        <begin position="1"/>
        <end position="305"/>
    </location>
</feature>
<feature type="binding site" evidence="1">
    <location>
        <begin position="30"/>
        <end position="32"/>
    </location>
    <ligand>
        <name>S-adenosyl-L-methionine</name>
        <dbReference type="ChEBI" id="CHEBI:59789"/>
    </ligand>
</feature>
<feature type="binding site" evidence="1">
    <location>
        <position position="49"/>
    </location>
    <ligand>
        <name>S-adenosyl-L-methionine</name>
        <dbReference type="ChEBI" id="CHEBI:59789"/>
    </ligand>
</feature>
<feature type="binding site" evidence="1">
    <location>
        <position position="74"/>
    </location>
    <ligand>
        <name>S-adenosyl-L-methionine</name>
        <dbReference type="ChEBI" id="CHEBI:59789"/>
    </ligand>
</feature>
<feature type="binding site" evidence="1">
    <location>
        <position position="96"/>
    </location>
    <ligand>
        <name>S-adenosyl-L-methionine</name>
        <dbReference type="ChEBI" id="CHEBI:59789"/>
    </ligand>
</feature>
<feature type="binding site" evidence="1">
    <location>
        <position position="103"/>
    </location>
    <ligand>
        <name>S-adenosyl-L-methionine</name>
        <dbReference type="ChEBI" id="CHEBI:59789"/>
    </ligand>
</feature>